<protein>
    <recommendedName>
        <fullName>Uncharacterized membrane protein YjzD</fullName>
    </recommendedName>
</protein>
<feature type="chain" id="PRO_0000375821" description="Uncharacterized membrane protein YjzD">
    <location>
        <begin position="1"/>
        <end position="61"/>
    </location>
</feature>
<feature type="transmembrane region" description="Helical" evidence="1">
    <location>
        <begin position="4"/>
        <end position="24"/>
    </location>
</feature>
<feature type="transmembrane region" description="Helical" evidence="1">
    <location>
        <begin position="34"/>
        <end position="54"/>
    </location>
</feature>
<accession>O34713</accession>
<accession>Q79EU4</accession>
<organism>
    <name type="scientific">Bacillus subtilis (strain 168)</name>
    <dbReference type="NCBI Taxonomy" id="224308"/>
    <lineage>
        <taxon>Bacteria</taxon>
        <taxon>Bacillati</taxon>
        <taxon>Bacillota</taxon>
        <taxon>Bacilli</taxon>
        <taxon>Bacillales</taxon>
        <taxon>Bacillaceae</taxon>
        <taxon>Bacillus</taxon>
    </lineage>
</organism>
<comment type="subcellular location">
    <subcellularLocation>
        <location evidence="2">Cell membrane</location>
        <topology evidence="2">Multi-pass membrane protein</topology>
    </subcellularLocation>
</comment>
<gene>
    <name type="primary">yjzD</name>
    <name type="ordered locus">BSU11270</name>
</gene>
<proteinExistence type="predicted"/>
<sequence>MRYIIAFIWTFLLSHMACYLVASMNSVTYNFKTSSVIAVVLYVLIMVLAEIMPMNKNASQH</sequence>
<reference key="1">
    <citation type="journal article" date="1997" name="J. Bacteriol.">
        <title>A new Bacillus subtilis gene, med, encodes a positive regulator of comK.</title>
        <authorList>
            <person name="Ogura M."/>
            <person name="Ohshiro Y."/>
            <person name="Hirao S."/>
            <person name="Tanaka T."/>
        </authorList>
    </citation>
    <scope>NUCLEOTIDE SEQUENCE [GENOMIC DNA]</scope>
    <source>
        <strain>168 / CU741</strain>
    </source>
</reference>
<reference key="2">
    <citation type="journal article" date="1997" name="Nature">
        <title>The complete genome sequence of the Gram-positive bacterium Bacillus subtilis.</title>
        <authorList>
            <person name="Kunst F."/>
            <person name="Ogasawara N."/>
            <person name="Moszer I."/>
            <person name="Albertini A.M."/>
            <person name="Alloni G."/>
            <person name="Azevedo V."/>
            <person name="Bertero M.G."/>
            <person name="Bessieres P."/>
            <person name="Bolotin A."/>
            <person name="Borchert S."/>
            <person name="Borriss R."/>
            <person name="Boursier L."/>
            <person name="Brans A."/>
            <person name="Braun M."/>
            <person name="Brignell S.C."/>
            <person name="Bron S."/>
            <person name="Brouillet S."/>
            <person name="Bruschi C.V."/>
            <person name="Caldwell B."/>
            <person name="Capuano V."/>
            <person name="Carter N.M."/>
            <person name="Choi S.-K."/>
            <person name="Codani J.-J."/>
            <person name="Connerton I.F."/>
            <person name="Cummings N.J."/>
            <person name="Daniel R.A."/>
            <person name="Denizot F."/>
            <person name="Devine K.M."/>
            <person name="Duesterhoeft A."/>
            <person name="Ehrlich S.D."/>
            <person name="Emmerson P.T."/>
            <person name="Entian K.-D."/>
            <person name="Errington J."/>
            <person name="Fabret C."/>
            <person name="Ferrari E."/>
            <person name="Foulger D."/>
            <person name="Fritz C."/>
            <person name="Fujita M."/>
            <person name="Fujita Y."/>
            <person name="Fuma S."/>
            <person name="Galizzi A."/>
            <person name="Galleron N."/>
            <person name="Ghim S.-Y."/>
            <person name="Glaser P."/>
            <person name="Goffeau A."/>
            <person name="Golightly E.J."/>
            <person name="Grandi G."/>
            <person name="Guiseppi G."/>
            <person name="Guy B.J."/>
            <person name="Haga K."/>
            <person name="Haiech J."/>
            <person name="Harwood C.R."/>
            <person name="Henaut A."/>
            <person name="Hilbert H."/>
            <person name="Holsappel S."/>
            <person name="Hosono S."/>
            <person name="Hullo M.-F."/>
            <person name="Itaya M."/>
            <person name="Jones L.-M."/>
            <person name="Joris B."/>
            <person name="Karamata D."/>
            <person name="Kasahara Y."/>
            <person name="Klaerr-Blanchard M."/>
            <person name="Klein C."/>
            <person name="Kobayashi Y."/>
            <person name="Koetter P."/>
            <person name="Koningstein G."/>
            <person name="Krogh S."/>
            <person name="Kumano M."/>
            <person name="Kurita K."/>
            <person name="Lapidus A."/>
            <person name="Lardinois S."/>
            <person name="Lauber J."/>
            <person name="Lazarevic V."/>
            <person name="Lee S.-M."/>
            <person name="Levine A."/>
            <person name="Liu H."/>
            <person name="Masuda S."/>
            <person name="Mauel C."/>
            <person name="Medigue C."/>
            <person name="Medina N."/>
            <person name="Mellado R.P."/>
            <person name="Mizuno M."/>
            <person name="Moestl D."/>
            <person name="Nakai S."/>
            <person name="Noback M."/>
            <person name="Noone D."/>
            <person name="O'Reilly M."/>
            <person name="Ogawa K."/>
            <person name="Ogiwara A."/>
            <person name="Oudega B."/>
            <person name="Park S.-H."/>
            <person name="Parro V."/>
            <person name="Pohl T.M."/>
            <person name="Portetelle D."/>
            <person name="Porwollik S."/>
            <person name="Prescott A.M."/>
            <person name="Presecan E."/>
            <person name="Pujic P."/>
            <person name="Purnelle B."/>
            <person name="Rapoport G."/>
            <person name="Rey M."/>
            <person name="Reynolds S."/>
            <person name="Rieger M."/>
            <person name="Rivolta C."/>
            <person name="Rocha E."/>
            <person name="Roche B."/>
            <person name="Rose M."/>
            <person name="Sadaie Y."/>
            <person name="Sato T."/>
            <person name="Scanlan E."/>
            <person name="Schleich S."/>
            <person name="Schroeter R."/>
            <person name="Scoffone F."/>
            <person name="Sekiguchi J."/>
            <person name="Sekowska A."/>
            <person name="Seror S.J."/>
            <person name="Serror P."/>
            <person name="Shin B.-S."/>
            <person name="Soldo B."/>
            <person name="Sorokin A."/>
            <person name="Tacconi E."/>
            <person name="Takagi T."/>
            <person name="Takahashi H."/>
            <person name="Takemaru K."/>
            <person name="Takeuchi M."/>
            <person name="Tamakoshi A."/>
            <person name="Tanaka T."/>
            <person name="Terpstra P."/>
            <person name="Tognoni A."/>
            <person name="Tosato V."/>
            <person name="Uchiyama S."/>
            <person name="Vandenbol M."/>
            <person name="Vannier F."/>
            <person name="Vassarotti A."/>
            <person name="Viari A."/>
            <person name="Wambutt R."/>
            <person name="Wedler E."/>
            <person name="Wedler H."/>
            <person name="Weitzenegger T."/>
            <person name="Winters P."/>
            <person name="Wipat A."/>
            <person name="Yamamoto H."/>
            <person name="Yamane K."/>
            <person name="Yasumoto K."/>
            <person name="Yata K."/>
            <person name="Yoshida K."/>
            <person name="Yoshikawa H.-F."/>
            <person name="Zumstein E."/>
            <person name="Yoshikawa H."/>
            <person name="Danchin A."/>
        </authorList>
    </citation>
    <scope>NUCLEOTIDE SEQUENCE [LARGE SCALE GENOMIC DNA]</scope>
    <source>
        <strain>168</strain>
    </source>
</reference>
<keyword id="KW-1003">Cell membrane</keyword>
<keyword id="KW-0472">Membrane</keyword>
<keyword id="KW-1185">Reference proteome</keyword>
<keyword id="KW-0812">Transmembrane</keyword>
<keyword id="KW-1133">Transmembrane helix</keyword>
<name>YJZD_BACSU</name>
<dbReference type="EMBL" id="D86376">
    <property type="protein sequence ID" value="BAA22925.1"/>
    <property type="molecule type" value="Genomic_DNA"/>
</dbReference>
<dbReference type="EMBL" id="AL009126">
    <property type="protein sequence ID" value="CAB12968.1"/>
    <property type="molecule type" value="Genomic_DNA"/>
</dbReference>
<dbReference type="PIR" id="G69854">
    <property type="entry name" value="G69854"/>
</dbReference>
<dbReference type="RefSeq" id="NP_389009.1">
    <property type="nucleotide sequence ID" value="NC_000964.3"/>
</dbReference>
<dbReference type="RefSeq" id="WP_003245236.1">
    <property type="nucleotide sequence ID" value="NZ_OZ025638.1"/>
</dbReference>
<dbReference type="SMR" id="O34713"/>
<dbReference type="FunCoup" id="O34713">
    <property type="interactions" value="13"/>
</dbReference>
<dbReference type="PaxDb" id="224308-BSU11270"/>
<dbReference type="EnsemblBacteria" id="CAB12968">
    <property type="protein sequence ID" value="CAB12968"/>
    <property type="gene ID" value="BSU_11270"/>
</dbReference>
<dbReference type="GeneID" id="939364"/>
<dbReference type="KEGG" id="bsu:BSU11270"/>
<dbReference type="PATRIC" id="fig|224308.179.peg.1212"/>
<dbReference type="InParanoid" id="O34713"/>
<dbReference type="OrthoDB" id="2440739at2"/>
<dbReference type="BioCyc" id="BSUB:BSU11270-MONOMER"/>
<dbReference type="Proteomes" id="UP000001570">
    <property type="component" value="Chromosome"/>
</dbReference>
<dbReference type="GO" id="GO:0005886">
    <property type="term" value="C:plasma membrane"/>
    <property type="evidence" value="ECO:0007669"/>
    <property type="project" value="UniProtKB-SubCell"/>
</dbReference>
<dbReference type="InterPro" id="IPR021324">
    <property type="entry name" value="DUF2929"/>
</dbReference>
<dbReference type="Pfam" id="PF11151">
    <property type="entry name" value="DUF2929"/>
    <property type="match status" value="1"/>
</dbReference>
<evidence type="ECO:0000255" key="1"/>
<evidence type="ECO:0000305" key="2"/>